<feature type="chain" id="PRO_0000130464" description="Large ribosomal subunit protein uL29">
    <location>
        <begin position="1"/>
        <end position="68"/>
    </location>
</feature>
<accession>P66180</accession>
<accession>Q9A1W6</accession>
<comment type="similarity">
    <text evidence="1">Belongs to the universal ribosomal protein uL29 family.</text>
</comment>
<dbReference type="EMBL" id="AE009948">
    <property type="protein sequence ID" value="AAM98974.1"/>
    <property type="molecule type" value="Genomic_DNA"/>
</dbReference>
<dbReference type="RefSeq" id="NP_687102.1">
    <property type="nucleotide sequence ID" value="NC_004116.1"/>
</dbReference>
<dbReference type="RefSeq" id="WP_000775731.1">
    <property type="nucleotide sequence ID" value="NC_004116.1"/>
</dbReference>
<dbReference type="SMR" id="P66180"/>
<dbReference type="STRING" id="208435.SAG0066"/>
<dbReference type="GeneID" id="69900034"/>
<dbReference type="KEGG" id="sag:SAG0066"/>
<dbReference type="PATRIC" id="fig|208435.3.peg.65"/>
<dbReference type="HOGENOM" id="CLU_158491_5_2_9"/>
<dbReference type="OrthoDB" id="9815192at2"/>
<dbReference type="Proteomes" id="UP000000821">
    <property type="component" value="Chromosome"/>
</dbReference>
<dbReference type="GO" id="GO:0022625">
    <property type="term" value="C:cytosolic large ribosomal subunit"/>
    <property type="evidence" value="ECO:0007669"/>
    <property type="project" value="TreeGrafter"/>
</dbReference>
<dbReference type="GO" id="GO:0003735">
    <property type="term" value="F:structural constituent of ribosome"/>
    <property type="evidence" value="ECO:0007669"/>
    <property type="project" value="InterPro"/>
</dbReference>
<dbReference type="GO" id="GO:0006412">
    <property type="term" value="P:translation"/>
    <property type="evidence" value="ECO:0007669"/>
    <property type="project" value="UniProtKB-UniRule"/>
</dbReference>
<dbReference type="CDD" id="cd00427">
    <property type="entry name" value="Ribosomal_L29_HIP"/>
    <property type="match status" value="1"/>
</dbReference>
<dbReference type="FunFam" id="1.10.287.310:FF:000001">
    <property type="entry name" value="50S ribosomal protein L29"/>
    <property type="match status" value="1"/>
</dbReference>
<dbReference type="Gene3D" id="1.10.287.310">
    <property type="match status" value="1"/>
</dbReference>
<dbReference type="HAMAP" id="MF_00374">
    <property type="entry name" value="Ribosomal_uL29"/>
    <property type="match status" value="1"/>
</dbReference>
<dbReference type="InterPro" id="IPR050063">
    <property type="entry name" value="Ribosomal_protein_uL29"/>
</dbReference>
<dbReference type="InterPro" id="IPR001854">
    <property type="entry name" value="Ribosomal_uL29"/>
</dbReference>
<dbReference type="InterPro" id="IPR018254">
    <property type="entry name" value="Ribosomal_uL29_CS"/>
</dbReference>
<dbReference type="InterPro" id="IPR036049">
    <property type="entry name" value="Ribosomal_uL29_sf"/>
</dbReference>
<dbReference type="NCBIfam" id="TIGR00012">
    <property type="entry name" value="L29"/>
    <property type="match status" value="1"/>
</dbReference>
<dbReference type="PANTHER" id="PTHR10916">
    <property type="entry name" value="60S RIBOSOMAL PROTEIN L35/50S RIBOSOMAL PROTEIN L29"/>
    <property type="match status" value="1"/>
</dbReference>
<dbReference type="PANTHER" id="PTHR10916:SF0">
    <property type="entry name" value="LARGE RIBOSOMAL SUBUNIT PROTEIN UL29C"/>
    <property type="match status" value="1"/>
</dbReference>
<dbReference type="Pfam" id="PF00831">
    <property type="entry name" value="Ribosomal_L29"/>
    <property type="match status" value="1"/>
</dbReference>
<dbReference type="SUPFAM" id="SSF46561">
    <property type="entry name" value="Ribosomal protein L29 (L29p)"/>
    <property type="match status" value="1"/>
</dbReference>
<dbReference type="PROSITE" id="PS00579">
    <property type="entry name" value="RIBOSOMAL_L29"/>
    <property type="match status" value="1"/>
</dbReference>
<reference key="1">
    <citation type="journal article" date="2002" name="Proc. Natl. Acad. Sci. U.S.A.">
        <title>Complete genome sequence and comparative genomic analysis of an emerging human pathogen, serotype V Streptococcus agalactiae.</title>
        <authorList>
            <person name="Tettelin H."/>
            <person name="Masignani V."/>
            <person name="Cieslewicz M.J."/>
            <person name="Eisen J.A."/>
            <person name="Peterson S.N."/>
            <person name="Wessels M.R."/>
            <person name="Paulsen I.T."/>
            <person name="Nelson K.E."/>
            <person name="Margarit I."/>
            <person name="Read T.D."/>
            <person name="Madoff L.C."/>
            <person name="Wolf A.M."/>
            <person name="Beanan M.J."/>
            <person name="Brinkac L.M."/>
            <person name="Daugherty S.C."/>
            <person name="DeBoy R.T."/>
            <person name="Durkin A.S."/>
            <person name="Kolonay J.F."/>
            <person name="Madupu R."/>
            <person name="Lewis M.R."/>
            <person name="Radune D."/>
            <person name="Fedorova N.B."/>
            <person name="Scanlan D."/>
            <person name="Khouri H.M."/>
            <person name="Mulligan S."/>
            <person name="Carty H.A."/>
            <person name="Cline R.T."/>
            <person name="Van Aken S.E."/>
            <person name="Gill J."/>
            <person name="Scarselli M."/>
            <person name="Mora M."/>
            <person name="Iacobini E.T."/>
            <person name="Brettoni C."/>
            <person name="Galli G."/>
            <person name="Mariani M."/>
            <person name="Vegni F."/>
            <person name="Maione D."/>
            <person name="Rinaudo D."/>
            <person name="Rappuoli R."/>
            <person name="Telford J.L."/>
            <person name="Kasper D.L."/>
            <person name="Grandi G."/>
            <person name="Fraser C.M."/>
        </authorList>
    </citation>
    <scope>NUCLEOTIDE SEQUENCE [LARGE SCALE GENOMIC DNA]</scope>
    <source>
        <strain>ATCC BAA-611 / 2603 V/R</strain>
    </source>
</reference>
<gene>
    <name evidence="1" type="primary">rpmC</name>
    <name type="ordered locus">SAG0066</name>
</gene>
<name>RL29_STRA5</name>
<proteinExistence type="inferred from homology"/>
<keyword id="KW-1185">Reference proteome</keyword>
<keyword id="KW-0687">Ribonucleoprotein</keyword>
<keyword id="KW-0689">Ribosomal protein</keyword>
<sequence length="68" mass="7962">MKLQEIKDFVKELRGLSQEELAKKENELKKELFDLRFQAAAGQLEKTARLDEVKKQIARVKTVQSEMK</sequence>
<protein>
    <recommendedName>
        <fullName evidence="1">Large ribosomal subunit protein uL29</fullName>
    </recommendedName>
    <alternativeName>
        <fullName evidence="2">50S ribosomal protein L29</fullName>
    </alternativeName>
</protein>
<organism>
    <name type="scientific">Streptococcus agalactiae serotype V (strain ATCC BAA-611 / 2603 V/R)</name>
    <dbReference type="NCBI Taxonomy" id="208435"/>
    <lineage>
        <taxon>Bacteria</taxon>
        <taxon>Bacillati</taxon>
        <taxon>Bacillota</taxon>
        <taxon>Bacilli</taxon>
        <taxon>Lactobacillales</taxon>
        <taxon>Streptococcaceae</taxon>
        <taxon>Streptococcus</taxon>
    </lineage>
</organism>
<evidence type="ECO:0000255" key="1">
    <source>
        <dbReference type="HAMAP-Rule" id="MF_00374"/>
    </source>
</evidence>
<evidence type="ECO:0000305" key="2"/>